<reference key="1">
    <citation type="journal article" date="2000" name="Science">
        <title>The genome sequence of Drosophila melanogaster.</title>
        <authorList>
            <person name="Adams M.D."/>
            <person name="Celniker S.E."/>
            <person name="Holt R.A."/>
            <person name="Evans C.A."/>
            <person name="Gocayne J.D."/>
            <person name="Amanatides P.G."/>
            <person name="Scherer S.E."/>
            <person name="Li P.W."/>
            <person name="Hoskins R.A."/>
            <person name="Galle R.F."/>
            <person name="George R.A."/>
            <person name="Lewis S.E."/>
            <person name="Richards S."/>
            <person name="Ashburner M."/>
            <person name="Henderson S.N."/>
            <person name="Sutton G.G."/>
            <person name="Wortman J.R."/>
            <person name="Yandell M.D."/>
            <person name="Zhang Q."/>
            <person name="Chen L.X."/>
            <person name="Brandon R.C."/>
            <person name="Rogers Y.-H.C."/>
            <person name="Blazej R.G."/>
            <person name="Champe M."/>
            <person name="Pfeiffer B.D."/>
            <person name="Wan K.H."/>
            <person name="Doyle C."/>
            <person name="Baxter E.G."/>
            <person name="Helt G."/>
            <person name="Nelson C.R."/>
            <person name="Miklos G.L.G."/>
            <person name="Abril J.F."/>
            <person name="Agbayani A."/>
            <person name="An H.-J."/>
            <person name="Andrews-Pfannkoch C."/>
            <person name="Baldwin D."/>
            <person name="Ballew R.M."/>
            <person name="Basu A."/>
            <person name="Baxendale J."/>
            <person name="Bayraktaroglu L."/>
            <person name="Beasley E.M."/>
            <person name="Beeson K.Y."/>
            <person name="Benos P.V."/>
            <person name="Berman B.P."/>
            <person name="Bhandari D."/>
            <person name="Bolshakov S."/>
            <person name="Borkova D."/>
            <person name="Botchan M.R."/>
            <person name="Bouck J."/>
            <person name="Brokstein P."/>
            <person name="Brottier P."/>
            <person name="Burtis K.C."/>
            <person name="Busam D.A."/>
            <person name="Butler H."/>
            <person name="Cadieu E."/>
            <person name="Center A."/>
            <person name="Chandra I."/>
            <person name="Cherry J.M."/>
            <person name="Cawley S."/>
            <person name="Dahlke C."/>
            <person name="Davenport L.B."/>
            <person name="Davies P."/>
            <person name="de Pablos B."/>
            <person name="Delcher A."/>
            <person name="Deng Z."/>
            <person name="Mays A.D."/>
            <person name="Dew I."/>
            <person name="Dietz S.M."/>
            <person name="Dodson K."/>
            <person name="Doup L.E."/>
            <person name="Downes M."/>
            <person name="Dugan-Rocha S."/>
            <person name="Dunkov B.C."/>
            <person name="Dunn P."/>
            <person name="Durbin K.J."/>
            <person name="Evangelista C.C."/>
            <person name="Ferraz C."/>
            <person name="Ferriera S."/>
            <person name="Fleischmann W."/>
            <person name="Fosler C."/>
            <person name="Gabrielian A.E."/>
            <person name="Garg N.S."/>
            <person name="Gelbart W.M."/>
            <person name="Glasser K."/>
            <person name="Glodek A."/>
            <person name="Gong F."/>
            <person name="Gorrell J.H."/>
            <person name="Gu Z."/>
            <person name="Guan P."/>
            <person name="Harris M."/>
            <person name="Harris N.L."/>
            <person name="Harvey D.A."/>
            <person name="Heiman T.J."/>
            <person name="Hernandez J.R."/>
            <person name="Houck J."/>
            <person name="Hostin D."/>
            <person name="Houston K.A."/>
            <person name="Howland T.J."/>
            <person name="Wei M.-H."/>
            <person name="Ibegwam C."/>
            <person name="Jalali M."/>
            <person name="Kalush F."/>
            <person name="Karpen G.H."/>
            <person name="Ke Z."/>
            <person name="Kennison J.A."/>
            <person name="Ketchum K.A."/>
            <person name="Kimmel B.E."/>
            <person name="Kodira C.D."/>
            <person name="Kraft C.L."/>
            <person name="Kravitz S."/>
            <person name="Kulp D."/>
            <person name="Lai Z."/>
            <person name="Lasko P."/>
            <person name="Lei Y."/>
            <person name="Levitsky A.A."/>
            <person name="Li J.H."/>
            <person name="Li Z."/>
            <person name="Liang Y."/>
            <person name="Lin X."/>
            <person name="Liu X."/>
            <person name="Mattei B."/>
            <person name="McIntosh T.C."/>
            <person name="McLeod M.P."/>
            <person name="McPherson D."/>
            <person name="Merkulov G."/>
            <person name="Milshina N.V."/>
            <person name="Mobarry C."/>
            <person name="Morris J."/>
            <person name="Moshrefi A."/>
            <person name="Mount S.M."/>
            <person name="Moy M."/>
            <person name="Murphy B."/>
            <person name="Murphy L."/>
            <person name="Muzny D.M."/>
            <person name="Nelson D.L."/>
            <person name="Nelson D.R."/>
            <person name="Nelson K.A."/>
            <person name="Nixon K."/>
            <person name="Nusskern D.R."/>
            <person name="Pacleb J.M."/>
            <person name="Palazzolo M."/>
            <person name="Pittman G.S."/>
            <person name="Pan S."/>
            <person name="Pollard J."/>
            <person name="Puri V."/>
            <person name="Reese M.G."/>
            <person name="Reinert K."/>
            <person name="Remington K."/>
            <person name="Saunders R.D.C."/>
            <person name="Scheeler F."/>
            <person name="Shen H."/>
            <person name="Shue B.C."/>
            <person name="Siden-Kiamos I."/>
            <person name="Simpson M."/>
            <person name="Skupski M.P."/>
            <person name="Smith T.J."/>
            <person name="Spier E."/>
            <person name="Spradling A.C."/>
            <person name="Stapleton M."/>
            <person name="Strong R."/>
            <person name="Sun E."/>
            <person name="Svirskas R."/>
            <person name="Tector C."/>
            <person name="Turner R."/>
            <person name="Venter E."/>
            <person name="Wang A.H."/>
            <person name="Wang X."/>
            <person name="Wang Z.-Y."/>
            <person name="Wassarman D.A."/>
            <person name="Weinstock G.M."/>
            <person name="Weissenbach J."/>
            <person name="Williams S.M."/>
            <person name="Woodage T."/>
            <person name="Worley K.C."/>
            <person name="Wu D."/>
            <person name="Yang S."/>
            <person name="Yao Q.A."/>
            <person name="Ye J."/>
            <person name="Yeh R.-F."/>
            <person name="Zaveri J.S."/>
            <person name="Zhan M."/>
            <person name="Zhang G."/>
            <person name="Zhao Q."/>
            <person name="Zheng L."/>
            <person name="Zheng X.H."/>
            <person name="Zhong F.N."/>
            <person name="Zhong W."/>
            <person name="Zhou X."/>
            <person name="Zhu S.C."/>
            <person name="Zhu X."/>
            <person name="Smith H.O."/>
            <person name="Gibbs R.A."/>
            <person name="Myers E.W."/>
            <person name="Rubin G.M."/>
            <person name="Venter J.C."/>
        </authorList>
    </citation>
    <scope>NUCLEOTIDE SEQUENCE [LARGE SCALE GENOMIC DNA]</scope>
    <source>
        <strain>Berkeley</strain>
    </source>
</reference>
<reference key="2">
    <citation type="journal article" date="2002" name="Genome Biol.">
        <title>Annotation of the Drosophila melanogaster euchromatic genome: a systematic review.</title>
        <authorList>
            <person name="Misra S."/>
            <person name="Crosby M.A."/>
            <person name="Mungall C.J."/>
            <person name="Matthews B.B."/>
            <person name="Campbell K.S."/>
            <person name="Hradecky P."/>
            <person name="Huang Y."/>
            <person name="Kaminker J.S."/>
            <person name="Millburn G.H."/>
            <person name="Prochnik S.E."/>
            <person name="Smith C.D."/>
            <person name="Tupy J.L."/>
            <person name="Whitfield E.J."/>
            <person name="Bayraktaroglu L."/>
            <person name="Berman B.P."/>
            <person name="Bettencourt B.R."/>
            <person name="Celniker S.E."/>
            <person name="de Grey A.D.N.J."/>
            <person name="Drysdale R.A."/>
            <person name="Harris N.L."/>
            <person name="Richter J."/>
            <person name="Russo S."/>
            <person name="Schroeder A.J."/>
            <person name="Shu S.Q."/>
            <person name="Stapleton M."/>
            <person name="Yamada C."/>
            <person name="Ashburner M."/>
            <person name="Gelbart W.M."/>
            <person name="Rubin G.M."/>
            <person name="Lewis S.E."/>
        </authorList>
    </citation>
    <scope>GENOME REANNOTATION</scope>
    <source>
        <strain>Berkeley</strain>
    </source>
</reference>
<reference key="3">
    <citation type="journal article" date="2015" name="Oncogene">
        <title>Crumbs interacts with Xpd for nuclear division control in Drosophila.</title>
        <authorList>
            <person name="Yeom E."/>
            <person name="Hong S.T."/>
            <person name="Choi K.W."/>
        </authorList>
    </citation>
    <scope>FUNCTION</scope>
    <scope>INTERACTION WITH THE CGX COMPLEX</scope>
    <scope>DISRUPTION PHENOTYPE</scope>
</reference>
<reference key="4">
    <citation type="journal article" date="2018" name="Development">
        <title>Mms19 is a mitotic gene that permits Cdk7 to be fully active as a Cdk-activating kinase.</title>
        <authorList>
            <person name="Nag R.N."/>
            <person name="Niggli S."/>
            <person name="Sousa-Guimaraes S."/>
            <person name="Vazquez-Pianzola P."/>
            <person name="Suter B."/>
        </authorList>
    </citation>
    <scope>INTERACTION WITH XPD AND MMS19</scope>
</reference>
<comment type="function">
    <text evidence="1">Component of the crb-galla-Xpd (CGX) complex which is essential for proper mitotic chromosome segregation in early embryos. The CGX complex is also required for cell proliferation in developing wing disks. In the CGX complex, acts with crb to recruit Xpd thus forming the functional complex.</text>
</comment>
<comment type="subunit">
    <text evidence="1 2">Component of the CGX complex composed of crb, galla (galla-1 or galla-2) and Xpd (PubMed:25065591). Interacts with crb (via intracellular domain) (PubMed:25065591). Also able to interact with Xpd in the absence of crb (PubMed:25065591). Interacts with Mms19 (PubMed:29361561).</text>
</comment>
<comment type="interaction">
    <interactant intactId="EBI-100085">
        <id>Q9VTC4</id>
    </interactant>
    <interactant intactId="EBI-175932">
        <id>Q7K1Y4</id>
        <label>Ciao1</label>
    </interactant>
    <organismsDiffer>false</organismsDiffer>
    <experiments>4</experiments>
</comment>
<comment type="disruption phenotype">
    <text evidence="1">Embryonic lethal. In 0-2 hr embryos, mutants display signs of incomplete chromosome segregation during mitotic divisions likely due to defective organization of spindle microtubules.</text>
</comment>
<comment type="miscellaneous">
    <text evidence="3">The name 'galla' means splitting in Korean and is derived from its role in chromosome segregation.</text>
</comment>
<comment type="similarity">
    <text evidence="4">Belongs to the MIP18 family.</text>
</comment>
<feature type="chain" id="PRO_0000212694" description="MIP18 family protein galla-2">
    <location>
        <begin position="1"/>
        <end position="156"/>
    </location>
</feature>
<feature type="helix" evidence="6">
    <location>
        <begin position="10"/>
        <end position="16"/>
    </location>
</feature>
<feature type="helix" evidence="6">
    <location>
        <begin position="36"/>
        <end position="43"/>
    </location>
</feature>
<feature type="strand" evidence="6">
    <location>
        <begin position="49"/>
        <end position="54"/>
    </location>
</feature>
<feature type="turn" evidence="6">
    <location>
        <begin position="55"/>
        <end position="59"/>
    </location>
</feature>
<feature type="helix" evidence="6">
    <location>
        <begin position="63"/>
        <end position="65"/>
    </location>
</feature>
<feature type="strand" evidence="6">
    <location>
        <begin position="66"/>
        <end position="69"/>
    </location>
</feature>
<feature type="turn" evidence="6">
    <location>
        <begin position="70"/>
        <end position="73"/>
    </location>
</feature>
<feature type="strand" evidence="6">
    <location>
        <begin position="74"/>
        <end position="79"/>
    </location>
</feature>
<feature type="helix" evidence="6">
    <location>
        <begin position="89"/>
        <end position="103"/>
    </location>
</feature>
<feature type="strand" evidence="6">
    <location>
        <begin position="109"/>
        <end position="114"/>
    </location>
</feature>
<feature type="helix" evidence="6">
    <location>
        <begin position="122"/>
        <end position="129"/>
    </location>
</feature>
<feature type="helix" evidence="6">
    <location>
        <begin position="132"/>
        <end position="139"/>
    </location>
</feature>
<feature type="helix" evidence="6">
    <location>
        <begin position="142"/>
        <end position="152"/>
    </location>
</feature>
<name>GALL2_DROME</name>
<accession>Q9VTC4</accession>
<protein>
    <recommendedName>
        <fullName evidence="3">MIP18 family protein galla-2</fullName>
    </recommendedName>
</protein>
<organism>
    <name type="scientific">Drosophila melanogaster</name>
    <name type="common">Fruit fly</name>
    <dbReference type="NCBI Taxonomy" id="7227"/>
    <lineage>
        <taxon>Eukaryota</taxon>
        <taxon>Metazoa</taxon>
        <taxon>Ecdysozoa</taxon>
        <taxon>Arthropoda</taxon>
        <taxon>Hexapoda</taxon>
        <taxon>Insecta</taxon>
        <taxon>Pterygota</taxon>
        <taxon>Neoptera</taxon>
        <taxon>Endopterygota</taxon>
        <taxon>Diptera</taxon>
        <taxon>Brachycera</taxon>
        <taxon>Muscomorpha</taxon>
        <taxon>Ephydroidea</taxon>
        <taxon>Drosophilidae</taxon>
        <taxon>Drosophila</taxon>
        <taxon>Sophophora</taxon>
    </lineage>
</organism>
<proteinExistence type="evidence at protein level"/>
<dbReference type="EMBL" id="AE014296">
    <property type="protein sequence ID" value="AAF50128.1"/>
    <property type="molecule type" value="Genomic_DNA"/>
</dbReference>
<dbReference type="RefSeq" id="NP_648416.1">
    <property type="nucleotide sequence ID" value="NM_140159.2"/>
</dbReference>
<dbReference type="PDB" id="6TBL">
    <property type="method" value="X-ray"/>
    <property type="resolution" value="2.65 A"/>
    <property type="chains" value="C/D=2-156"/>
</dbReference>
<dbReference type="PDB" id="6TBN">
    <property type="method" value="X-ray"/>
    <property type="resolution" value="2.00 A"/>
    <property type="chains" value="A=2-156"/>
</dbReference>
<dbReference type="PDB" id="6TC0">
    <property type="method" value="X-ray"/>
    <property type="resolution" value="3.60 A"/>
    <property type="chains" value="B/E=2-156"/>
</dbReference>
<dbReference type="PDBsum" id="6TBL"/>
<dbReference type="PDBsum" id="6TBN"/>
<dbReference type="PDBsum" id="6TC0"/>
<dbReference type="SMR" id="Q9VTC4"/>
<dbReference type="BioGRID" id="64598">
    <property type="interactions" value="10"/>
</dbReference>
<dbReference type="DIP" id="DIP-20907N"/>
<dbReference type="FunCoup" id="Q9VTC4">
    <property type="interactions" value="339"/>
</dbReference>
<dbReference type="IntAct" id="Q9VTC4">
    <property type="interactions" value="3"/>
</dbReference>
<dbReference type="STRING" id="7227.FBpp0075999"/>
<dbReference type="PaxDb" id="7227-FBpp0075999"/>
<dbReference type="EnsemblMetazoa" id="FBtr0076270">
    <property type="protein sequence ID" value="FBpp0075999"/>
    <property type="gene ID" value="FBgn0036107"/>
</dbReference>
<dbReference type="GeneID" id="39221"/>
<dbReference type="KEGG" id="dme:Dmel_CG7949"/>
<dbReference type="UCSC" id="CG7949-RA">
    <property type="organism name" value="d. melanogaster"/>
</dbReference>
<dbReference type="AGR" id="FB:FBgn0036107"/>
<dbReference type="CTD" id="39221"/>
<dbReference type="FlyBase" id="FBgn0036107">
    <property type="gene designation" value="galla-2"/>
</dbReference>
<dbReference type="VEuPathDB" id="VectorBase:FBgn0036107"/>
<dbReference type="eggNOG" id="KOG3381">
    <property type="taxonomic scope" value="Eukaryota"/>
</dbReference>
<dbReference type="GeneTree" id="ENSGT00390000017697"/>
<dbReference type="HOGENOM" id="CLU_075876_3_1_1"/>
<dbReference type="InParanoid" id="Q9VTC4"/>
<dbReference type="OMA" id="NQCISAR"/>
<dbReference type="OrthoDB" id="2746at2759"/>
<dbReference type="PhylomeDB" id="Q9VTC4"/>
<dbReference type="SignaLink" id="Q9VTC4"/>
<dbReference type="BioGRID-ORCS" id="39221">
    <property type="hits" value="0 hits in 1 CRISPR screen"/>
</dbReference>
<dbReference type="GenomeRNAi" id="39221"/>
<dbReference type="PRO" id="PR:Q9VTC4"/>
<dbReference type="Proteomes" id="UP000000803">
    <property type="component" value="Chromosome 3L"/>
</dbReference>
<dbReference type="Bgee" id="FBgn0036107">
    <property type="expression patterns" value="Expressed in adult class III enteroendocrine cell in adult midgut (Drosophila) and 101 other cell types or tissues"/>
</dbReference>
<dbReference type="ExpressionAtlas" id="Q9VTC4">
    <property type="expression patterns" value="baseline and differential"/>
</dbReference>
<dbReference type="GO" id="GO:0097361">
    <property type="term" value="C:cytosolic [4Fe-4S] assembly targeting complex"/>
    <property type="evidence" value="ECO:0000314"/>
    <property type="project" value="FlyBase"/>
</dbReference>
<dbReference type="GO" id="GO:1902695">
    <property type="term" value="C:metallochaperone complex"/>
    <property type="evidence" value="ECO:0000314"/>
    <property type="project" value="FlyBase"/>
</dbReference>
<dbReference type="GO" id="GO:0051301">
    <property type="term" value="P:cell division"/>
    <property type="evidence" value="ECO:0007669"/>
    <property type="project" value="UniProtKB-KW"/>
</dbReference>
<dbReference type="GO" id="GO:0007059">
    <property type="term" value="P:chromosome segregation"/>
    <property type="evidence" value="ECO:0007669"/>
    <property type="project" value="UniProtKB-KW"/>
</dbReference>
<dbReference type="GO" id="GO:0051604">
    <property type="term" value="P:protein maturation"/>
    <property type="evidence" value="ECO:0007669"/>
    <property type="project" value="InterPro"/>
</dbReference>
<dbReference type="FunFam" id="3.30.300.130:FF:000005">
    <property type="entry name" value="Mitotic spindle-associated mmxd complex subunit"/>
    <property type="match status" value="1"/>
</dbReference>
<dbReference type="Gene3D" id="6.10.250.1280">
    <property type="match status" value="1"/>
</dbReference>
<dbReference type="Gene3D" id="3.30.300.130">
    <property type="entry name" value="Fe-S cluster assembly (FSCA)"/>
    <property type="match status" value="1"/>
</dbReference>
<dbReference type="InterPro" id="IPR034904">
    <property type="entry name" value="FSCA_dom_sf"/>
</dbReference>
<dbReference type="InterPro" id="IPR039796">
    <property type="entry name" value="MIP18"/>
</dbReference>
<dbReference type="InterPro" id="IPR002744">
    <property type="entry name" value="MIP18-like"/>
</dbReference>
<dbReference type="PANTHER" id="PTHR12377:SF0">
    <property type="entry name" value="CYTOSOLIC IRON-SULFUR ASSEMBLY COMPONENT 2B"/>
    <property type="match status" value="1"/>
</dbReference>
<dbReference type="PANTHER" id="PTHR12377">
    <property type="entry name" value="CYTOSOLIC IRON-SULFUR ASSEMBLY COMPONENT 2B-RELATED"/>
    <property type="match status" value="1"/>
</dbReference>
<dbReference type="Pfam" id="PF01883">
    <property type="entry name" value="FeS_assembly_P"/>
    <property type="match status" value="1"/>
</dbReference>
<dbReference type="SUPFAM" id="SSF117916">
    <property type="entry name" value="Fe-S cluster assembly (FSCA) domain-like"/>
    <property type="match status" value="1"/>
</dbReference>
<sequence>MPTEIENINPNVYDRIKERVLTANEEDENVPDPFDKREIFDLIRNINDPEHPLTLEELHVVQEDLIRINDSQNSVHISFTPTIPHCSMATLIGLSIRVKLLRSLPPRFKVTVEITPGTHASELAVNKQLADKERVAAALENNHLAEVINQCIAAKG</sequence>
<evidence type="ECO:0000269" key="1">
    <source>
    </source>
</evidence>
<evidence type="ECO:0000269" key="2">
    <source>
    </source>
</evidence>
<evidence type="ECO:0000303" key="3">
    <source>
    </source>
</evidence>
<evidence type="ECO:0000305" key="4"/>
<evidence type="ECO:0000312" key="5">
    <source>
        <dbReference type="FlyBase" id="FBgn0036107"/>
    </source>
</evidence>
<evidence type="ECO:0007829" key="6">
    <source>
        <dbReference type="PDB" id="6TBN"/>
    </source>
</evidence>
<gene>
    <name evidence="3 5" type="primary">galla-2</name>
    <name evidence="5" type="ORF">CG7949</name>
</gene>
<keyword id="KW-0002">3D-structure</keyword>
<keyword id="KW-0131">Cell cycle</keyword>
<keyword id="KW-0132">Cell division</keyword>
<keyword id="KW-0159">Chromosome partition</keyword>
<keyword id="KW-0498">Mitosis</keyword>
<keyword id="KW-1185">Reference proteome</keyword>